<feature type="chain" id="PRO_0000365848" description="ATP synthase subunit c">
    <location>
        <begin position="1"/>
        <end position="70"/>
    </location>
</feature>
<feature type="transmembrane region" description="Helical" evidence="1">
    <location>
        <begin position="4"/>
        <end position="24"/>
    </location>
</feature>
<feature type="transmembrane region" description="Helical" evidence="1">
    <location>
        <begin position="45"/>
        <end position="65"/>
    </location>
</feature>
<feature type="site" description="Reversibly protonated during proton transport" evidence="1">
    <location>
        <position position="54"/>
    </location>
</feature>
<gene>
    <name evidence="1" type="primary">atpE</name>
    <name type="ordered locus">BPUM_3331</name>
</gene>
<name>ATPL_BACP2</name>
<dbReference type="EMBL" id="CP000813">
    <property type="protein sequence ID" value="ABV63984.1"/>
    <property type="molecule type" value="Genomic_DNA"/>
</dbReference>
<dbReference type="RefSeq" id="WP_003214968.1">
    <property type="nucleotide sequence ID" value="NZ_VEIS01000002.1"/>
</dbReference>
<dbReference type="SMR" id="A8FIB7"/>
<dbReference type="STRING" id="315750.BPUM_3331"/>
<dbReference type="GeneID" id="66361197"/>
<dbReference type="KEGG" id="bpu:BPUM_3331"/>
<dbReference type="eggNOG" id="COG0636">
    <property type="taxonomic scope" value="Bacteria"/>
</dbReference>
<dbReference type="HOGENOM" id="CLU_148047_1_1_9"/>
<dbReference type="OrthoDB" id="2357540at2"/>
<dbReference type="Proteomes" id="UP000001355">
    <property type="component" value="Chromosome"/>
</dbReference>
<dbReference type="GO" id="GO:0005886">
    <property type="term" value="C:plasma membrane"/>
    <property type="evidence" value="ECO:0007669"/>
    <property type="project" value="UniProtKB-SubCell"/>
</dbReference>
<dbReference type="GO" id="GO:0045259">
    <property type="term" value="C:proton-transporting ATP synthase complex"/>
    <property type="evidence" value="ECO:0007669"/>
    <property type="project" value="UniProtKB-KW"/>
</dbReference>
<dbReference type="GO" id="GO:0033177">
    <property type="term" value="C:proton-transporting two-sector ATPase complex, proton-transporting domain"/>
    <property type="evidence" value="ECO:0007669"/>
    <property type="project" value="InterPro"/>
</dbReference>
<dbReference type="GO" id="GO:0008289">
    <property type="term" value="F:lipid binding"/>
    <property type="evidence" value="ECO:0007669"/>
    <property type="project" value="UniProtKB-KW"/>
</dbReference>
<dbReference type="GO" id="GO:0046933">
    <property type="term" value="F:proton-transporting ATP synthase activity, rotational mechanism"/>
    <property type="evidence" value="ECO:0007669"/>
    <property type="project" value="UniProtKB-UniRule"/>
</dbReference>
<dbReference type="CDD" id="cd18185">
    <property type="entry name" value="ATP-synt_Fo_c_ATPE"/>
    <property type="match status" value="1"/>
</dbReference>
<dbReference type="FunFam" id="1.20.20.10:FF:000004">
    <property type="entry name" value="ATP synthase subunit c"/>
    <property type="match status" value="1"/>
</dbReference>
<dbReference type="Gene3D" id="1.20.20.10">
    <property type="entry name" value="F1F0 ATP synthase subunit C"/>
    <property type="match status" value="1"/>
</dbReference>
<dbReference type="HAMAP" id="MF_01396">
    <property type="entry name" value="ATP_synth_c_bact"/>
    <property type="match status" value="1"/>
</dbReference>
<dbReference type="InterPro" id="IPR005953">
    <property type="entry name" value="ATP_synth_csu_bac/chlpt"/>
</dbReference>
<dbReference type="InterPro" id="IPR000454">
    <property type="entry name" value="ATP_synth_F0_csu"/>
</dbReference>
<dbReference type="InterPro" id="IPR020537">
    <property type="entry name" value="ATP_synth_F0_csu_DDCD_BS"/>
</dbReference>
<dbReference type="InterPro" id="IPR038662">
    <property type="entry name" value="ATP_synth_F0_csu_sf"/>
</dbReference>
<dbReference type="InterPro" id="IPR002379">
    <property type="entry name" value="ATPase_proteolipid_c-like_dom"/>
</dbReference>
<dbReference type="InterPro" id="IPR035921">
    <property type="entry name" value="F/V-ATP_Csub_sf"/>
</dbReference>
<dbReference type="NCBIfam" id="TIGR01260">
    <property type="entry name" value="ATP_synt_c"/>
    <property type="match status" value="1"/>
</dbReference>
<dbReference type="NCBIfam" id="NF005363">
    <property type="entry name" value="PRK06876.1"/>
    <property type="match status" value="1"/>
</dbReference>
<dbReference type="PANTHER" id="PTHR10031">
    <property type="entry name" value="ATP SYNTHASE LIPID-BINDING PROTEIN, MITOCHONDRIAL"/>
    <property type="match status" value="1"/>
</dbReference>
<dbReference type="PANTHER" id="PTHR10031:SF0">
    <property type="entry name" value="ATPASE PROTEIN 9"/>
    <property type="match status" value="1"/>
</dbReference>
<dbReference type="Pfam" id="PF00137">
    <property type="entry name" value="ATP-synt_C"/>
    <property type="match status" value="1"/>
</dbReference>
<dbReference type="PRINTS" id="PR00124">
    <property type="entry name" value="ATPASEC"/>
</dbReference>
<dbReference type="SUPFAM" id="SSF81333">
    <property type="entry name" value="F1F0 ATP synthase subunit C"/>
    <property type="match status" value="1"/>
</dbReference>
<dbReference type="PROSITE" id="PS00605">
    <property type="entry name" value="ATPASE_C"/>
    <property type="match status" value="1"/>
</dbReference>
<keyword id="KW-0066">ATP synthesis</keyword>
<keyword id="KW-1003">Cell membrane</keyword>
<keyword id="KW-0138">CF(0)</keyword>
<keyword id="KW-0375">Hydrogen ion transport</keyword>
<keyword id="KW-0406">Ion transport</keyword>
<keyword id="KW-0446">Lipid-binding</keyword>
<keyword id="KW-0472">Membrane</keyword>
<keyword id="KW-0812">Transmembrane</keyword>
<keyword id="KW-1133">Transmembrane helix</keyword>
<keyword id="KW-0813">Transport</keyword>
<organism>
    <name type="scientific">Bacillus pumilus (strain SAFR-032)</name>
    <dbReference type="NCBI Taxonomy" id="315750"/>
    <lineage>
        <taxon>Bacteria</taxon>
        <taxon>Bacillati</taxon>
        <taxon>Bacillota</taxon>
        <taxon>Bacilli</taxon>
        <taxon>Bacillales</taxon>
        <taxon>Bacillaceae</taxon>
        <taxon>Bacillus</taxon>
    </lineage>
</organism>
<protein>
    <recommendedName>
        <fullName evidence="1">ATP synthase subunit c</fullName>
    </recommendedName>
    <alternativeName>
        <fullName evidence="1">ATP synthase F(0) sector subunit c</fullName>
    </alternativeName>
    <alternativeName>
        <fullName evidence="1">F-type ATPase subunit c</fullName>
        <shortName evidence="1">F-ATPase subunit c</shortName>
    </alternativeName>
    <alternativeName>
        <fullName evidence="1">Lipid-binding protein</fullName>
    </alternativeName>
</protein>
<accession>A8FIB7</accession>
<sequence>MNLIAAAIAIGLGALGAGIGNGLIVSKTVEGIARQPEAGRELRTLMFIGVALVEALPIIAVVIAFLAFFG</sequence>
<reference key="1">
    <citation type="journal article" date="2007" name="PLoS ONE">
        <title>Paradoxical DNA repair and peroxide resistance gene conservation in Bacillus pumilus SAFR-032.</title>
        <authorList>
            <person name="Gioia J."/>
            <person name="Yerrapragada S."/>
            <person name="Qin X."/>
            <person name="Jiang H."/>
            <person name="Igboeli O.C."/>
            <person name="Muzny D."/>
            <person name="Dugan-Rocha S."/>
            <person name="Ding Y."/>
            <person name="Hawes A."/>
            <person name="Liu W."/>
            <person name="Perez L."/>
            <person name="Kovar C."/>
            <person name="Dinh H."/>
            <person name="Lee S."/>
            <person name="Nazareth L."/>
            <person name="Blyth P."/>
            <person name="Holder M."/>
            <person name="Buhay C."/>
            <person name="Tirumalai M.R."/>
            <person name="Liu Y."/>
            <person name="Dasgupta I."/>
            <person name="Bokhetache L."/>
            <person name="Fujita M."/>
            <person name="Karouia F."/>
            <person name="Eswara Moorthy P."/>
            <person name="Siefert J."/>
            <person name="Uzman A."/>
            <person name="Buzumbo P."/>
            <person name="Verma A."/>
            <person name="Zwiya H."/>
            <person name="McWilliams B.D."/>
            <person name="Olowu A."/>
            <person name="Clinkenbeard K.D."/>
            <person name="Newcombe D."/>
            <person name="Golebiewski L."/>
            <person name="Petrosino J.F."/>
            <person name="Nicholson W.L."/>
            <person name="Fox G.E."/>
            <person name="Venkateswaran K."/>
            <person name="Highlander S.K."/>
            <person name="Weinstock G.M."/>
        </authorList>
    </citation>
    <scope>NUCLEOTIDE SEQUENCE [LARGE SCALE GENOMIC DNA]</scope>
    <source>
        <strain>SAFR-032</strain>
    </source>
</reference>
<proteinExistence type="inferred from homology"/>
<evidence type="ECO:0000255" key="1">
    <source>
        <dbReference type="HAMAP-Rule" id="MF_01396"/>
    </source>
</evidence>
<comment type="function">
    <text evidence="1">F(1)F(0) ATP synthase produces ATP from ADP in the presence of a proton or sodium gradient. F-type ATPases consist of two structural domains, F(1) containing the extramembraneous catalytic core and F(0) containing the membrane proton channel, linked together by a central stalk and a peripheral stalk. During catalysis, ATP synthesis in the catalytic domain of F(1) is coupled via a rotary mechanism of the central stalk subunits to proton translocation.</text>
</comment>
<comment type="subunit">
    <text evidence="1">F-type ATPases have 2 components, F(1) - the catalytic core - and F(0) - the membrane proton channel. F(1) has five subunits: alpha(3), beta(3), gamma(1), delta(1), epsilon(1). F(0) has three main subunits: a(1), b(2) and c(10-14). The alpha and beta chains form an alternating ring which encloses part of the gamma chain. F(1) is attached to F(0) by a central stalk formed by the gamma and epsilon chains, while a peripheral stalk is formed by the delta and b chains.</text>
</comment>
<comment type="subcellular location">
    <subcellularLocation>
        <location evidence="1">Cell membrane</location>
        <topology evidence="1">Multi-pass membrane protein</topology>
    </subcellularLocation>
</comment>
<comment type="similarity">
    <text evidence="1">Belongs to the ATPase C chain family.</text>
</comment>